<evidence type="ECO:0000250" key="1"/>
<evidence type="ECO:0000255" key="2"/>
<evidence type="ECO:0000255" key="3">
    <source>
        <dbReference type="PROSITE-ProRule" id="PRU00102"/>
    </source>
</evidence>
<evidence type="ECO:0000255" key="4">
    <source>
        <dbReference type="PROSITE-ProRule" id="PRU00107"/>
    </source>
</evidence>
<evidence type="ECO:0000256" key="5">
    <source>
        <dbReference type="SAM" id="MobiDB-lite"/>
    </source>
</evidence>
<accession>Q04943</accession>
<dbReference type="EC" id="2.7.13.3"/>
<dbReference type="EMBL" id="D10654">
    <property type="protein sequence ID" value="BAA01503.1"/>
    <property type="molecule type" value="Genomic_DNA"/>
</dbReference>
<dbReference type="EMBL" id="AL939121">
    <property type="protein sequence ID" value="CAC33071.1"/>
    <property type="molecule type" value="Genomic_DNA"/>
</dbReference>
<dbReference type="PIR" id="B45270">
    <property type="entry name" value="B45270"/>
</dbReference>
<dbReference type="RefSeq" id="NP_629059.1">
    <property type="nucleotide sequence ID" value="NC_003888.3"/>
</dbReference>
<dbReference type="RefSeq" id="WP_003974067.1">
    <property type="nucleotide sequence ID" value="NZ_VNID01000016.1"/>
</dbReference>
<dbReference type="SMR" id="Q04943"/>
<dbReference type="STRING" id="100226.gene:17762555"/>
<dbReference type="PaxDb" id="100226-SCO4906"/>
<dbReference type="GeneID" id="91384133"/>
<dbReference type="KEGG" id="sco:SCO4906"/>
<dbReference type="PATRIC" id="fig|100226.15.peg.4985"/>
<dbReference type="eggNOG" id="COG2205">
    <property type="taxonomic scope" value="Bacteria"/>
</dbReference>
<dbReference type="HOGENOM" id="CLU_000445_89_18_11"/>
<dbReference type="InParanoid" id="Q04943"/>
<dbReference type="OrthoDB" id="9786919at2"/>
<dbReference type="PhylomeDB" id="Q04943"/>
<dbReference type="BRENDA" id="2.7.13.3">
    <property type="organism ID" value="5998"/>
</dbReference>
<dbReference type="Proteomes" id="UP000001973">
    <property type="component" value="Chromosome"/>
</dbReference>
<dbReference type="GO" id="GO:0005886">
    <property type="term" value="C:plasma membrane"/>
    <property type="evidence" value="ECO:0007669"/>
    <property type="project" value="UniProtKB-SubCell"/>
</dbReference>
<dbReference type="GO" id="GO:0005524">
    <property type="term" value="F:ATP binding"/>
    <property type="evidence" value="ECO:0007669"/>
    <property type="project" value="UniProtKB-KW"/>
</dbReference>
<dbReference type="GO" id="GO:0000155">
    <property type="term" value="F:phosphorelay sensor kinase activity"/>
    <property type="evidence" value="ECO:0000318"/>
    <property type="project" value="GO_Central"/>
</dbReference>
<dbReference type="CDD" id="cd06225">
    <property type="entry name" value="HAMP"/>
    <property type="match status" value="1"/>
</dbReference>
<dbReference type="CDD" id="cd00075">
    <property type="entry name" value="HATPase"/>
    <property type="match status" value="1"/>
</dbReference>
<dbReference type="CDD" id="cd00082">
    <property type="entry name" value="HisKA"/>
    <property type="match status" value="1"/>
</dbReference>
<dbReference type="FunFam" id="1.10.287.130:FF:000010">
    <property type="entry name" value="Two-component sensor histidine kinase"/>
    <property type="match status" value="1"/>
</dbReference>
<dbReference type="FunFam" id="3.30.565.10:FF:000013">
    <property type="entry name" value="Two-component sensor histidine kinase"/>
    <property type="match status" value="1"/>
</dbReference>
<dbReference type="Gene3D" id="1.10.287.130">
    <property type="match status" value="1"/>
</dbReference>
<dbReference type="Gene3D" id="6.10.340.10">
    <property type="match status" value="1"/>
</dbReference>
<dbReference type="Gene3D" id="3.30.565.10">
    <property type="entry name" value="Histidine kinase-like ATPase, C-terminal domain"/>
    <property type="match status" value="1"/>
</dbReference>
<dbReference type="InterPro" id="IPR003660">
    <property type="entry name" value="HAMP_dom"/>
</dbReference>
<dbReference type="InterPro" id="IPR036890">
    <property type="entry name" value="HATPase_C_sf"/>
</dbReference>
<dbReference type="InterPro" id="IPR005467">
    <property type="entry name" value="His_kinase_dom"/>
</dbReference>
<dbReference type="InterPro" id="IPR003661">
    <property type="entry name" value="HisK_dim/P_dom"/>
</dbReference>
<dbReference type="InterPro" id="IPR036097">
    <property type="entry name" value="HisK_dim/P_sf"/>
</dbReference>
<dbReference type="InterPro" id="IPR004358">
    <property type="entry name" value="Sig_transdc_His_kin-like_C"/>
</dbReference>
<dbReference type="PANTHER" id="PTHR43547:SF2">
    <property type="entry name" value="HYBRID SIGNAL TRANSDUCTION HISTIDINE KINASE C"/>
    <property type="match status" value="1"/>
</dbReference>
<dbReference type="PANTHER" id="PTHR43547">
    <property type="entry name" value="TWO-COMPONENT HISTIDINE KINASE"/>
    <property type="match status" value="1"/>
</dbReference>
<dbReference type="Pfam" id="PF00672">
    <property type="entry name" value="HAMP"/>
    <property type="match status" value="1"/>
</dbReference>
<dbReference type="Pfam" id="PF02518">
    <property type="entry name" value="HATPase_c"/>
    <property type="match status" value="1"/>
</dbReference>
<dbReference type="Pfam" id="PF00512">
    <property type="entry name" value="HisKA"/>
    <property type="match status" value="1"/>
</dbReference>
<dbReference type="PRINTS" id="PR00344">
    <property type="entry name" value="BCTRLSENSOR"/>
</dbReference>
<dbReference type="SMART" id="SM00304">
    <property type="entry name" value="HAMP"/>
    <property type="match status" value="1"/>
</dbReference>
<dbReference type="SMART" id="SM00387">
    <property type="entry name" value="HATPase_c"/>
    <property type="match status" value="1"/>
</dbReference>
<dbReference type="SMART" id="SM00388">
    <property type="entry name" value="HisKA"/>
    <property type="match status" value="1"/>
</dbReference>
<dbReference type="SUPFAM" id="SSF55874">
    <property type="entry name" value="ATPase domain of HSP90 chaperone/DNA topoisomerase II/histidine kinase"/>
    <property type="match status" value="1"/>
</dbReference>
<dbReference type="SUPFAM" id="SSF158472">
    <property type="entry name" value="HAMP domain-like"/>
    <property type="match status" value="1"/>
</dbReference>
<dbReference type="SUPFAM" id="SSF47384">
    <property type="entry name" value="Homodimeric domain of signal transducing histidine kinase"/>
    <property type="match status" value="1"/>
</dbReference>
<dbReference type="PROSITE" id="PS50885">
    <property type="entry name" value="HAMP"/>
    <property type="match status" value="1"/>
</dbReference>
<dbReference type="PROSITE" id="PS50109">
    <property type="entry name" value="HIS_KIN"/>
    <property type="match status" value="1"/>
</dbReference>
<sequence length="535" mass="57425">MTREHQGGTRGLAAARKGFWSGLRFTSLRLRLVLVFGLVALTAAVSASGIAYWLNREAVLTRTQDAVLRDFEQEMQNRAGALPEHPTQDEVQHTAGQMANSSQRFSVLLVAENADGTAVYGSSGGLGGVALSDVPESLRTAVNKEQKLTSANKHPYHLYWQRITDDGTPYLVAGTKVIGGGPTGYMLKSLEPEAKDLNSLAWSLGIATALALLGSALLAQALATTVLKPVHRLGVAARRLGEGKLDTRLRVSGTDELADLSRTFNSAAENLEKRVADMAGREQASRRFVADMSHELRTPLTALTAVTEVLEEELEYAGEGEGEGGSFDPMVEPAVRLVVSETRRLNDLVENLMEVTRFDAGTARLVLDDVDVADQITACIDARAWLDAVDLDAERGVHARLDPRRLDVILANLIGNALKHGGSPVRVSVARADHEIVIRVRDNGPGIPEDVLPHVFDRFYKASASRPRSEGSGLGLSIALENAHIHGGEITAENAPEGGAVFTLRLPQDPSPPADEDGGPDEETEDRGKDAKGQV</sequence>
<proteinExistence type="inferred from homology"/>
<feature type="chain" id="PRO_0000074683" description="Signal transduction histidine-protein kinase AfsQ2">
    <location>
        <begin position="1"/>
        <end position="535"/>
    </location>
</feature>
<feature type="topological domain" description="Cytoplasmic" evidence="2">
    <location>
        <begin position="1"/>
        <end position="30"/>
    </location>
</feature>
<feature type="transmembrane region" description="Helical" evidence="2">
    <location>
        <begin position="31"/>
        <end position="52"/>
    </location>
</feature>
<feature type="topological domain" description="Extracellular" evidence="2">
    <location>
        <begin position="53"/>
        <end position="198"/>
    </location>
</feature>
<feature type="transmembrane region" description="Helical" evidence="2">
    <location>
        <begin position="199"/>
        <end position="219"/>
    </location>
</feature>
<feature type="topological domain" description="Cytoplasmic" evidence="2">
    <location>
        <begin position="220"/>
        <end position="535"/>
    </location>
</feature>
<feature type="domain" description="HAMP" evidence="3">
    <location>
        <begin position="224"/>
        <end position="276"/>
    </location>
</feature>
<feature type="domain" description="Histidine kinase" evidence="4">
    <location>
        <begin position="291"/>
        <end position="510"/>
    </location>
</feature>
<feature type="region of interest" description="Disordered" evidence="5">
    <location>
        <begin position="493"/>
        <end position="535"/>
    </location>
</feature>
<feature type="compositionally biased region" description="Acidic residues" evidence="5">
    <location>
        <begin position="514"/>
        <end position="525"/>
    </location>
</feature>
<feature type="compositionally biased region" description="Basic and acidic residues" evidence="5">
    <location>
        <begin position="526"/>
        <end position="535"/>
    </location>
</feature>
<feature type="modified residue" description="Phosphohistidine" evidence="1">
    <location>
        <position position="294"/>
    </location>
</feature>
<comment type="function">
    <text>Forms part of a two-component regulatory system AfsQ1/AfsQ2 involved in secondary metabolism. May activate AfsQ1 by phosphorylation.</text>
</comment>
<comment type="catalytic activity">
    <reaction>
        <text>ATP + protein L-histidine = ADP + protein N-phospho-L-histidine.</text>
        <dbReference type="EC" id="2.7.13.3"/>
    </reaction>
</comment>
<comment type="subcellular location">
    <subcellularLocation>
        <location>Cell membrane</location>
        <topology>Multi-pass membrane protein</topology>
    </subcellularLocation>
</comment>
<name>AFSQ2_STRCO</name>
<protein>
    <recommendedName>
        <fullName>Signal transduction histidine-protein kinase AfsQ2</fullName>
        <ecNumber>2.7.13.3</ecNumber>
    </recommendedName>
</protein>
<organism>
    <name type="scientific">Streptomyces coelicolor (strain ATCC BAA-471 / A3(2) / M145)</name>
    <dbReference type="NCBI Taxonomy" id="100226"/>
    <lineage>
        <taxon>Bacteria</taxon>
        <taxon>Bacillati</taxon>
        <taxon>Actinomycetota</taxon>
        <taxon>Actinomycetes</taxon>
        <taxon>Kitasatosporales</taxon>
        <taxon>Streptomycetaceae</taxon>
        <taxon>Streptomyces</taxon>
        <taxon>Streptomyces albidoflavus group</taxon>
    </lineage>
</organism>
<gene>
    <name type="primary">afsQ2</name>
    <name type="ordered locus">SCO4906</name>
    <name type="ORF">2SCK8.32c</name>
</gene>
<keyword id="KW-0067">ATP-binding</keyword>
<keyword id="KW-1003">Cell membrane</keyword>
<keyword id="KW-0418">Kinase</keyword>
<keyword id="KW-0472">Membrane</keyword>
<keyword id="KW-0547">Nucleotide-binding</keyword>
<keyword id="KW-0597">Phosphoprotein</keyword>
<keyword id="KW-1185">Reference proteome</keyword>
<keyword id="KW-0808">Transferase</keyword>
<keyword id="KW-0812">Transmembrane</keyword>
<keyword id="KW-1133">Transmembrane helix</keyword>
<keyword id="KW-0902">Two-component regulatory system</keyword>
<reference key="1">
    <citation type="journal article" date="1992" name="J. Bacteriol.">
        <title>A putative two-component regulatory system involved in secondary metabolism in Streptomyces spp.</title>
        <authorList>
            <person name="Ishizuka H."/>
            <person name="Horinouchi S."/>
            <person name="Kieser H.M."/>
            <person name="Hopwood D.A."/>
            <person name="Beppu T."/>
        </authorList>
    </citation>
    <scope>NUCLEOTIDE SEQUENCE [GENOMIC DNA]</scope>
    <source>
        <strain>A3(2) / NRRL B-16638</strain>
    </source>
</reference>
<reference key="2">
    <citation type="journal article" date="2002" name="Nature">
        <title>Complete genome sequence of the model actinomycete Streptomyces coelicolor A3(2).</title>
        <authorList>
            <person name="Bentley S.D."/>
            <person name="Chater K.F."/>
            <person name="Cerdeno-Tarraga A.-M."/>
            <person name="Challis G.L."/>
            <person name="Thomson N.R."/>
            <person name="James K.D."/>
            <person name="Harris D.E."/>
            <person name="Quail M.A."/>
            <person name="Kieser H."/>
            <person name="Harper D."/>
            <person name="Bateman A."/>
            <person name="Brown S."/>
            <person name="Chandra G."/>
            <person name="Chen C.W."/>
            <person name="Collins M."/>
            <person name="Cronin A."/>
            <person name="Fraser A."/>
            <person name="Goble A."/>
            <person name="Hidalgo J."/>
            <person name="Hornsby T."/>
            <person name="Howarth S."/>
            <person name="Huang C.-H."/>
            <person name="Kieser T."/>
            <person name="Larke L."/>
            <person name="Murphy L.D."/>
            <person name="Oliver K."/>
            <person name="O'Neil S."/>
            <person name="Rabbinowitsch E."/>
            <person name="Rajandream M.A."/>
            <person name="Rutherford K.M."/>
            <person name="Rutter S."/>
            <person name="Seeger K."/>
            <person name="Saunders D."/>
            <person name="Sharp S."/>
            <person name="Squares R."/>
            <person name="Squares S."/>
            <person name="Taylor K."/>
            <person name="Warren T."/>
            <person name="Wietzorrek A."/>
            <person name="Woodward J.R."/>
            <person name="Barrell B.G."/>
            <person name="Parkhill J."/>
            <person name="Hopwood D.A."/>
        </authorList>
    </citation>
    <scope>NUCLEOTIDE SEQUENCE [LARGE SCALE GENOMIC DNA]</scope>
    <source>
        <strain>ATCC BAA-471 / A3(2) / M145</strain>
    </source>
</reference>